<accession>A8M532</accession>
<dbReference type="EMBL" id="CP000850">
    <property type="protein sequence ID" value="ABW00100.1"/>
    <property type="molecule type" value="Genomic_DNA"/>
</dbReference>
<dbReference type="SMR" id="A8M532"/>
<dbReference type="STRING" id="391037.Sare_4318"/>
<dbReference type="KEGG" id="saq:Sare_4318"/>
<dbReference type="PATRIC" id="fig|391037.6.peg.4359"/>
<dbReference type="eggNOG" id="COG0480">
    <property type="taxonomic scope" value="Bacteria"/>
</dbReference>
<dbReference type="HOGENOM" id="CLU_002794_4_1_11"/>
<dbReference type="OrthoDB" id="9801472at2"/>
<dbReference type="GO" id="GO:0005737">
    <property type="term" value="C:cytoplasm"/>
    <property type="evidence" value="ECO:0007669"/>
    <property type="project" value="UniProtKB-SubCell"/>
</dbReference>
<dbReference type="GO" id="GO:0005525">
    <property type="term" value="F:GTP binding"/>
    <property type="evidence" value="ECO:0007669"/>
    <property type="project" value="UniProtKB-UniRule"/>
</dbReference>
<dbReference type="GO" id="GO:0003924">
    <property type="term" value="F:GTPase activity"/>
    <property type="evidence" value="ECO:0007669"/>
    <property type="project" value="InterPro"/>
</dbReference>
<dbReference type="GO" id="GO:0003746">
    <property type="term" value="F:translation elongation factor activity"/>
    <property type="evidence" value="ECO:0007669"/>
    <property type="project" value="UniProtKB-UniRule"/>
</dbReference>
<dbReference type="GO" id="GO:0032790">
    <property type="term" value="P:ribosome disassembly"/>
    <property type="evidence" value="ECO:0007669"/>
    <property type="project" value="TreeGrafter"/>
</dbReference>
<dbReference type="CDD" id="cd01886">
    <property type="entry name" value="EF-G"/>
    <property type="match status" value="1"/>
</dbReference>
<dbReference type="CDD" id="cd16262">
    <property type="entry name" value="EFG_III"/>
    <property type="match status" value="1"/>
</dbReference>
<dbReference type="CDD" id="cd01434">
    <property type="entry name" value="EFG_mtEFG1_IV"/>
    <property type="match status" value="1"/>
</dbReference>
<dbReference type="CDD" id="cd03713">
    <property type="entry name" value="EFG_mtEFG_C"/>
    <property type="match status" value="1"/>
</dbReference>
<dbReference type="CDD" id="cd04088">
    <property type="entry name" value="EFG_mtEFG_II"/>
    <property type="match status" value="1"/>
</dbReference>
<dbReference type="FunFam" id="2.40.30.10:FF:000006">
    <property type="entry name" value="Elongation factor G"/>
    <property type="match status" value="1"/>
</dbReference>
<dbReference type="FunFam" id="3.30.230.10:FF:000003">
    <property type="entry name" value="Elongation factor G"/>
    <property type="match status" value="1"/>
</dbReference>
<dbReference type="FunFam" id="3.30.70.240:FF:000001">
    <property type="entry name" value="Elongation factor G"/>
    <property type="match status" value="1"/>
</dbReference>
<dbReference type="FunFam" id="3.30.70.870:FF:000001">
    <property type="entry name" value="Elongation factor G"/>
    <property type="match status" value="1"/>
</dbReference>
<dbReference type="FunFam" id="3.40.50.300:FF:000029">
    <property type="entry name" value="Elongation factor G"/>
    <property type="match status" value="1"/>
</dbReference>
<dbReference type="Gene3D" id="3.30.230.10">
    <property type="match status" value="1"/>
</dbReference>
<dbReference type="Gene3D" id="3.30.70.240">
    <property type="match status" value="1"/>
</dbReference>
<dbReference type="Gene3D" id="3.30.70.870">
    <property type="entry name" value="Elongation Factor G (Translational Gtpase), domain 3"/>
    <property type="match status" value="1"/>
</dbReference>
<dbReference type="Gene3D" id="3.40.50.300">
    <property type="entry name" value="P-loop containing nucleotide triphosphate hydrolases"/>
    <property type="match status" value="1"/>
</dbReference>
<dbReference type="Gene3D" id="2.40.30.10">
    <property type="entry name" value="Translation factors"/>
    <property type="match status" value="1"/>
</dbReference>
<dbReference type="HAMAP" id="MF_00054_B">
    <property type="entry name" value="EF_G_EF_2_B"/>
    <property type="match status" value="1"/>
</dbReference>
<dbReference type="InterPro" id="IPR053905">
    <property type="entry name" value="EF-G-like_DII"/>
</dbReference>
<dbReference type="InterPro" id="IPR041095">
    <property type="entry name" value="EFG_II"/>
</dbReference>
<dbReference type="InterPro" id="IPR009022">
    <property type="entry name" value="EFG_III"/>
</dbReference>
<dbReference type="InterPro" id="IPR035647">
    <property type="entry name" value="EFG_III/V"/>
</dbReference>
<dbReference type="InterPro" id="IPR047872">
    <property type="entry name" value="EFG_IV"/>
</dbReference>
<dbReference type="InterPro" id="IPR035649">
    <property type="entry name" value="EFG_V"/>
</dbReference>
<dbReference type="InterPro" id="IPR000640">
    <property type="entry name" value="EFG_V-like"/>
</dbReference>
<dbReference type="InterPro" id="IPR031157">
    <property type="entry name" value="G_TR_CS"/>
</dbReference>
<dbReference type="InterPro" id="IPR027417">
    <property type="entry name" value="P-loop_NTPase"/>
</dbReference>
<dbReference type="InterPro" id="IPR020568">
    <property type="entry name" value="Ribosomal_Su5_D2-typ_SF"/>
</dbReference>
<dbReference type="InterPro" id="IPR014721">
    <property type="entry name" value="Ribsml_uS5_D2-typ_fold_subgr"/>
</dbReference>
<dbReference type="InterPro" id="IPR005225">
    <property type="entry name" value="Small_GTP-bd"/>
</dbReference>
<dbReference type="InterPro" id="IPR000795">
    <property type="entry name" value="T_Tr_GTP-bd_dom"/>
</dbReference>
<dbReference type="InterPro" id="IPR009000">
    <property type="entry name" value="Transl_B-barrel_sf"/>
</dbReference>
<dbReference type="InterPro" id="IPR004540">
    <property type="entry name" value="Transl_elong_EFG/EF2"/>
</dbReference>
<dbReference type="InterPro" id="IPR005517">
    <property type="entry name" value="Transl_elong_EFG/EF2_IV"/>
</dbReference>
<dbReference type="NCBIfam" id="TIGR00484">
    <property type="entry name" value="EF-G"/>
    <property type="match status" value="1"/>
</dbReference>
<dbReference type="NCBIfam" id="NF009379">
    <property type="entry name" value="PRK12740.1-3"/>
    <property type="match status" value="1"/>
</dbReference>
<dbReference type="NCBIfam" id="NF009381">
    <property type="entry name" value="PRK12740.1-5"/>
    <property type="match status" value="1"/>
</dbReference>
<dbReference type="NCBIfam" id="TIGR00231">
    <property type="entry name" value="small_GTP"/>
    <property type="match status" value="1"/>
</dbReference>
<dbReference type="PANTHER" id="PTHR43261:SF1">
    <property type="entry name" value="RIBOSOME-RELEASING FACTOR 2, MITOCHONDRIAL"/>
    <property type="match status" value="1"/>
</dbReference>
<dbReference type="PANTHER" id="PTHR43261">
    <property type="entry name" value="TRANSLATION ELONGATION FACTOR G-RELATED"/>
    <property type="match status" value="1"/>
</dbReference>
<dbReference type="Pfam" id="PF22042">
    <property type="entry name" value="EF-G_D2"/>
    <property type="match status" value="1"/>
</dbReference>
<dbReference type="Pfam" id="PF00679">
    <property type="entry name" value="EFG_C"/>
    <property type="match status" value="1"/>
</dbReference>
<dbReference type="Pfam" id="PF14492">
    <property type="entry name" value="EFG_III"/>
    <property type="match status" value="1"/>
</dbReference>
<dbReference type="Pfam" id="PF03764">
    <property type="entry name" value="EFG_IV"/>
    <property type="match status" value="1"/>
</dbReference>
<dbReference type="Pfam" id="PF00009">
    <property type="entry name" value="GTP_EFTU"/>
    <property type="match status" value="1"/>
</dbReference>
<dbReference type="PRINTS" id="PR00315">
    <property type="entry name" value="ELONGATNFCT"/>
</dbReference>
<dbReference type="SMART" id="SM00838">
    <property type="entry name" value="EFG_C"/>
    <property type="match status" value="1"/>
</dbReference>
<dbReference type="SMART" id="SM00889">
    <property type="entry name" value="EFG_IV"/>
    <property type="match status" value="1"/>
</dbReference>
<dbReference type="SUPFAM" id="SSF54980">
    <property type="entry name" value="EF-G C-terminal domain-like"/>
    <property type="match status" value="2"/>
</dbReference>
<dbReference type="SUPFAM" id="SSF52540">
    <property type="entry name" value="P-loop containing nucleoside triphosphate hydrolases"/>
    <property type="match status" value="1"/>
</dbReference>
<dbReference type="SUPFAM" id="SSF54211">
    <property type="entry name" value="Ribosomal protein S5 domain 2-like"/>
    <property type="match status" value="1"/>
</dbReference>
<dbReference type="SUPFAM" id="SSF50447">
    <property type="entry name" value="Translation proteins"/>
    <property type="match status" value="1"/>
</dbReference>
<dbReference type="PROSITE" id="PS00301">
    <property type="entry name" value="G_TR_1"/>
    <property type="match status" value="1"/>
</dbReference>
<dbReference type="PROSITE" id="PS51722">
    <property type="entry name" value="G_TR_2"/>
    <property type="match status" value="1"/>
</dbReference>
<gene>
    <name evidence="1" type="primary">fusA</name>
    <name type="ordered locus">Sare_4318</name>
</gene>
<organism>
    <name type="scientific">Salinispora arenicola (strain CNS-205)</name>
    <dbReference type="NCBI Taxonomy" id="391037"/>
    <lineage>
        <taxon>Bacteria</taxon>
        <taxon>Bacillati</taxon>
        <taxon>Actinomycetota</taxon>
        <taxon>Actinomycetes</taxon>
        <taxon>Micromonosporales</taxon>
        <taxon>Micromonosporaceae</taxon>
        <taxon>Salinispora</taxon>
    </lineage>
</organism>
<name>EFG_SALAI</name>
<evidence type="ECO:0000255" key="1">
    <source>
        <dbReference type="HAMAP-Rule" id="MF_00054"/>
    </source>
</evidence>
<evidence type="ECO:0000256" key="2">
    <source>
        <dbReference type="SAM" id="MobiDB-lite"/>
    </source>
</evidence>
<comment type="function">
    <text evidence="1">Catalyzes the GTP-dependent ribosomal translocation step during translation elongation. During this step, the ribosome changes from the pre-translocational (PRE) to the post-translocational (POST) state as the newly formed A-site-bound peptidyl-tRNA and P-site-bound deacylated tRNA move to the P and E sites, respectively. Catalyzes the coordinated movement of the two tRNA molecules, the mRNA and conformational changes in the ribosome.</text>
</comment>
<comment type="subcellular location">
    <subcellularLocation>
        <location evidence="1">Cytoplasm</location>
    </subcellularLocation>
</comment>
<comment type="similarity">
    <text evidence="1">Belongs to the TRAFAC class translation factor GTPase superfamily. Classic translation factor GTPase family. EF-G/EF-2 subfamily.</text>
</comment>
<protein>
    <recommendedName>
        <fullName evidence="1">Elongation factor G</fullName>
        <shortName evidence="1">EF-G</shortName>
    </recommendedName>
</protein>
<keyword id="KW-0963">Cytoplasm</keyword>
<keyword id="KW-0251">Elongation factor</keyword>
<keyword id="KW-0342">GTP-binding</keyword>
<keyword id="KW-0547">Nucleotide-binding</keyword>
<keyword id="KW-0648">Protein biosynthesis</keyword>
<reference key="1">
    <citation type="submission" date="2007-10" db="EMBL/GenBank/DDBJ databases">
        <title>Complete sequence of Salinispora arenicola CNS-205.</title>
        <authorList>
            <consortium name="US DOE Joint Genome Institute"/>
            <person name="Copeland A."/>
            <person name="Lucas S."/>
            <person name="Lapidus A."/>
            <person name="Barry K."/>
            <person name="Glavina del Rio T."/>
            <person name="Dalin E."/>
            <person name="Tice H."/>
            <person name="Pitluck S."/>
            <person name="Foster B."/>
            <person name="Schmutz J."/>
            <person name="Larimer F."/>
            <person name="Land M."/>
            <person name="Hauser L."/>
            <person name="Kyrpides N."/>
            <person name="Ivanova N."/>
            <person name="Jensen P.R."/>
            <person name="Moore B.S."/>
            <person name="Penn K."/>
            <person name="Jenkins C."/>
            <person name="Udwary D."/>
            <person name="Xiang L."/>
            <person name="Gontang E."/>
            <person name="Richardson P."/>
        </authorList>
    </citation>
    <scope>NUCLEOTIDE SEQUENCE [LARGE SCALE GENOMIC DNA]</scope>
    <source>
        <strain>CNS-205</strain>
    </source>
</reference>
<proteinExistence type="inferred from homology"/>
<feature type="chain" id="PRO_0000335854" description="Elongation factor G">
    <location>
        <begin position="1"/>
        <end position="698"/>
    </location>
</feature>
<feature type="domain" description="tr-type G">
    <location>
        <begin position="8"/>
        <end position="284"/>
    </location>
</feature>
<feature type="region of interest" description="Disordered" evidence="2">
    <location>
        <begin position="289"/>
        <end position="309"/>
    </location>
</feature>
<feature type="binding site" evidence="1">
    <location>
        <begin position="17"/>
        <end position="24"/>
    </location>
    <ligand>
        <name>GTP</name>
        <dbReference type="ChEBI" id="CHEBI:37565"/>
    </ligand>
</feature>
<feature type="binding site" evidence="1">
    <location>
        <begin position="81"/>
        <end position="85"/>
    </location>
    <ligand>
        <name>GTP</name>
        <dbReference type="ChEBI" id="CHEBI:37565"/>
    </ligand>
</feature>
<feature type="binding site" evidence="1">
    <location>
        <begin position="135"/>
        <end position="138"/>
    </location>
    <ligand>
        <name>GTP</name>
        <dbReference type="ChEBI" id="CHEBI:37565"/>
    </ligand>
</feature>
<sequence>MAAADALANVRNIGIMAHIDAGKTTTTERILFYTGITYKIGEVHEGAAVMDWMAQEQERGITITSAATKCEWKGHTIQIIDTPGHVDFTVEVERSLRVLDGAVAVYDGVAGVEPQTENVWRQADKYNVPRMCFVNKLDRTGADFFRCVQMMVDRLNATPLVLQVPIGLEADHIGVVDLIDMRALTWRGETQKGEDYAVEEIPAELADTAAEWREKLMETLADVDDAVMEKYLEGGEFSVEEIKAAIRRATIAGKANPVLCGSAFKNKGVQPMLDAVVDFLPSPLDIPAIEGTGTDGETPLQRKPSTSEPFSGLAFKIQTDKHLGKLTYMRVYSGVLESGSQVVNSTKDRKERIGKIYQMHANKREERSSAKAGDIIAVQGLKQTTTGDTLCDPANPVILESMTFPEPVIEVAIEPKTKADQEKLSTAIQRLAEEDPTFRVKLDDETGQTVISGMGELHLDILVDRMRREFNVEANIGKPQVAYRETIRRKVEKVEYTHKKQTGGSGQYARVIVSLEPLPLDNDSPTYEFANAVTGGRVPREFIPSVDAGAQDAMQYGILAGFPLVGVKLTLVDGQYHEVDSSEMAFKIAGSMVLKDAARKADPALLEPMMAVEVTTPEENMGDVIGDINSRRGIIQAMEERGGARVVRALVPLSEMFGYVGDLRSKTQGRASYSMQFDSYAEVPASVAKEIIAKATGE</sequence>